<name>RS20_COXBN</name>
<sequence length="90" mass="9958">MANSAQAKKRARQNEKRELHNASQRSAVRTAVKKILKSLQANDSSAAQSAYQHAVQILDKAAGRRIIHPNKAARLKSRLSQKIKNLSSSQ</sequence>
<accession>A9KEJ4</accession>
<organism>
    <name type="scientific">Coxiella burnetii (strain Dugway 5J108-111)</name>
    <dbReference type="NCBI Taxonomy" id="434922"/>
    <lineage>
        <taxon>Bacteria</taxon>
        <taxon>Pseudomonadati</taxon>
        <taxon>Pseudomonadota</taxon>
        <taxon>Gammaproteobacteria</taxon>
        <taxon>Legionellales</taxon>
        <taxon>Coxiellaceae</taxon>
        <taxon>Coxiella</taxon>
    </lineage>
</organism>
<comment type="function">
    <text evidence="1">Binds directly to 16S ribosomal RNA.</text>
</comment>
<comment type="similarity">
    <text evidence="1">Belongs to the bacterial ribosomal protein bS20 family.</text>
</comment>
<keyword id="KW-0687">Ribonucleoprotein</keyword>
<keyword id="KW-0689">Ribosomal protein</keyword>
<keyword id="KW-0694">RNA-binding</keyword>
<keyword id="KW-0699">rRNA-binding</keyword>
<evidence type="ECO:0000255" key="1">
    <source>
        <dbReference type="HAMAP-Rule" id="MF_00500"/>
    </source>
</evidence>
<evidence type="ECO:0000256" key="2">
    <source>
        <dbReference type="SAM" id="MobiDB-lite"/>
    </source>
</evidence>
<evidence type="ECO:0000305" key="3"/>
<dbReference type="EMBL" id="CP000733">
    <property type="protein sequence ID" value="ABS77740.1"/>
    <property type="molecule type" value="Genomic_DNA"/>
</dbReference>
<dbReference type="RefSeq" id="WP_005771970.1">
    <property type="nucleotide sequence ID" value="NC_009727.1"/>
</dbReference>
<dbReference type="SMR" id="A9KEJ4"/>
<dbReference type="KEGG" id="cbd:CBUD_1678"/>
<dbReference type="HOGENOM" id="CLU_160655_4_0_6"/>
<dbReference type="Proteomes" id="UP000008555">
    <property type="component" value="Chromosome"/>
</dbReference>
<dbReference type="GO" id="GO:0005829">
    <property type="term" value="C:cytosol"/>
    <property type="evidence" value="ECO:0007669"/>
    <property type="project" value="TreeGrafter"/>
</dbReference>
<dbReference type="GO" id="GO:0015935">
    <property type="term" value="C:small ribosomal subunit"/>
    <property type="evidence" value="ECO:0007669"/>
    <property type="project" value="TreeGrafter"/>
</dbReference>
<dbReference type="GO" id="GO:0070181">
    <property type="term" value="F:small ribosomal subunit rRNA binding"/>
    <property type="evidence" value="ECO:0007669"/>
    <property type="project" value="TreeGrafter"/>
</dbReference>
<dbReference type="GO" id="GO:0003735">
    <property type="term" value="F:structural constituent of ribosome"/>
    <property type="evidence" value="ECO:0007669"/>
    <property type="project" value="InterPro"/>
</dbReference>
<dbReference type="GO" id="GO:0006412">
    <property type="term" value="P:translation"/>
    <property type="evidence" value="ECO:0007669"/>
    <property type="project" value="UniProtKB-UniRule"/>
</dbReference>
<dbReference type="FunFam" id="1.20.58.110:FF:000001">
    <property type="entry name" value="30S ribosomal protein S20"/>
    <property type="match status" value="1"/>
</dbReference>
<dbReference type="Gene3D" id="1.20.58.110">
    <property type="entry name" value="Ribosomal protein S20"/>
    <property type="match status" value="1"/>
</dbReference>
<dbReference type="HAMAP" id="MF_00500">
    <property type="entry name" value="Ribosomal_bS20"/>
    <property type="match status" value="1"/>
</dbReference>
<dbReference type="InterPro" id="IPR002583">
    <property type="entry name" value="Ribosomal_bS20"/>
</dbReference>
<dbReference type="InterPro" id="IPR036510">
    <property type="entry name" value="Ribosomal_bS20_sf"/>
</dbReference>
<dbReference type="NCBIfam" id="TIGR00029">
    <property type="entry name" value="S20"/>
    <property type="match status" value="1"/>
</dbReference>
<dbReference type="PANTHER" id="PTHR33398">
    <property type="entry name" value="30S RIBOSOMAL PROTEIN S20"/>
    <property type="match status" value="1"/>
</dbReference>
<dbReference type="PANTHER" id="PTHR33398:SF1">
    <property type="entry name" value="SMALL RIBOSOMAL SUBUNIT PROTEIN BS20C"/>
    <property type="match status" value="1"/>
</dbReference>
<dbReference type="Pfam" id="PF01649">
    <property type="entry name" value="Ribosomal_S20p"/>
    <property type="match status" value="1"/>
</dbReference>
<dbReference type="SUPFAM" id="SSF46992">
    <property type="entry name" value="Ribosomal protein S20"/>
    <property type="match status" value="1"/>
</dbReference>
<protein>
    <recommendedName>
        <fullName evidence="1">Small ribosomal subunit protein bS20</fullName>
    </recommendedName>
    <alternativeName>
        <fullName evidence="3">30S ribosomal protein S20</fullName>
    </alternativeName>
</protein>
<reference key="1">
    <citation type="journal article" date="2009" name="Infect. Immun.">
        <title>Comparative genomics reveal extensive transposon-mediated genomic plasticity and diversity among potential effector proteins within the genus Coxiella.</title>
        <authorList>
            <person name="Beare P.A."/>
            <person name="Unsworth N."/>
            <person name="Andoh M."/>
            <person name="Voth D.E."/>
            <person name="Omsland A."/>
            <person name="Gilk S.D."/>
            <person name="Williams K.P."/>
            <person name="Sobral B.W."/>
            <person name="Kupko J.J. III"/>
            <person name="Porcella S.F."/>
            <person name="Samuel J.E."/>
            <person name="Heinzen R.A."/>
        </authorList>
    </citation>
    <scope>NUCLEOTIDE SEQUENCE [LARGE SCALE GENOMIC DNA]</scope>
    <source>
        <strain>Dugway 5J108-111</strain>
    </source>
</reference>
<proteinExistence type="inferred from homology"/>
<feature type="chain" id="PRO_1000081424" description="Small ribosomal subunit protein bS20">
    <location>
        <begin position="1"/>
        <end position="90"/>
    </location>
</feature>
<feature type="region of interest" description="Disordered" evidence="2">
    <location>
        <begin position="1"/>
        <end position="27"/>
    </location>
</feature>
<gene>
    <name evidence="1" type="primary">rpsT</name>
    <name type="ordered locus">CBUD_1678</name>
</gene>